<accession>P30181</accession>
<accession>Q56XA9</accession>
<accession>Q8RX06</accession>
<reference key="1">
    <citation type="journal article" date="1992" name="Plant Physiol.">
        <title>Cloning and characterization of an Arabidopsis thaliana topoisomerase I gene.</title>
        <authorList>
            <person name="Kieber J.J."/>
            <person name="Tissier A.F."/>
            <person name="Signer E.R."/>
        </authorList>
    </citation>
    <scope>NUCLEOTIDE SEQUENCE [MRNA]</scope>
    <scope>FUNCTION</scope>
    <source>
        <strain>cv. Columbia</strain>
    </source>
</reference>
<reference key="2">
    <citation type="journal article" date="1998" name="DNA Res.">
        <title>Structural analysis of Arabidopsis thaliana chromosome 5. VII. Sequence features of the regions of 1,013,767 bp covered by sixteen physically assigned P1 and TAC clones.</title>
        <authorList>
            <person name="Nakamura Y."/>
            <person name="Sato S."/>
            <person name="Asamizu E."/>
            <person name="Kaneko T."/>
            <person name="Kotani H."/>
            <person name="Miyajima N."/>
            <person name="Tabata S."/>
        </authorList>
    </citation>
    <scope>NUCLEOTIDE SEQUENCE [LARGE SCALE GENOMIC DNA]</scope>
    <source>
        <strain>cv. Columbia</strain>
    </source>
</reference>
<reference key="3">
    <citation type="journal article" date="2017" name="Plant J.">
        <title>Araport11: a complete reannotation of the Arabidopsis thaliana reference genome.</title>
        <authorList>
            <person name="Cheng C.Y."/>
            <person name="Krishnakumar V."/>
            <person name="Chan A.P."/>
            <person name="Thibaud-Nissen F."/>
            <person name="Schobel S."/>
            <person name="Town C.D."/>
        </authorList>
    </citation>
    <scope>GENOME REANNOTATION</scope>
    <source>
        <strain>cv. Columbia</strain>
    </source>
</reference>
<reference key="4">
    <citation type="journal article" date="2003" name="Science">
        <title>Empirical analysis of transcriptional activity in the Arabidopsis genome.</title>
        <authorList>
            <person name="Yamada K."/>
            <person name="Lim J."/>
            <person name="Dale J.M."/>
            <person name="Chen H."/>
            <person name="Shinn P."/>
            <person name="Palm C.J."/>
            <person name="Southwick A.M."/>
            <person name="Wu H.C."/>
            <person name="Kim C.J."/>
            <person name="Nguyen M."/>
            <person name="Pham P.K."/>
            <person name="Cheuk R.F."/>
            <person name="Karlin-Newmann G."/>
            <person name="Liu S.X."/>
            <person name="Lam B."/>
            <person name="Sakano H."/>
            <person name="Wu T."/>
            <person name="Yu G."/>
            <person name="Miranda M."/>
            <person name="Quach H.L."/>
            <person name="Tripp M."/>
            <person name="Chang C.H."/>
            <person name="Lee J.M."/>
            <person name="Toriumi M.J."/>
            <person name="Chan M.M."/>
            <person name="Tang C.C."/>
            <person name="Onodera C.S."/>
            <person name="Deng J.M."/>
            <person name="Akiyama K."/>
            <person name="Ansari Y."/>
            <person name="Arakawa T."/>
            <person name="Banh J."/>
            <person name="Banno F."/>
            <person name="Bowser L."/>
            <person name="Brooks S.Y."/>
            <person name="Carninci P."/>
            <person name="Chao Q."/>
            <person name="Choy N."/>
            <person name="Enju A."/>
            <person name="Goldsmith A.D."/>
            <person name="Gurjal M."/>
            <person name="Hansen N.F."/>
            <person name="Hayashizaki Y."/>
            <person name="Johnson-Hopson C."/>
            <person name="Hsuan V.W."/>
            <person name="Iida K."/>
            <person name="Karnes M."/>
            <person name="Khan S."/>
            <person name="Koesema E."/>
            <person name="Ishida J."/>
            <person name="Jiang P.X."/>
            <person name="Jones T."/>
            <person name="Kawai J."/>
            <person name="Kamiya A."/>
            <person name="Meyers C."/>
            <person name="Nakajima M."/>
            <person name="Narusaka M."/>
            <person name="Seki M."/>
            <person name="Sakurai T."/>
            <person name="Satou M."/>
            <person name="Tamse R."/>
            <person name="Vaysberg M."/>
            <person name="Wallender E.K."/>
            <person name="Wong C."/>
            <person name="Yamamura Y."/>
            <person name="Yuan S."/>
            <person name="Shinozaki K."/>
            <person name="Davis R.W."/>
            <person name="Theologis A."/>
            <person name="Ecker J.R."/>
        </authorList>
    </citation>
    <scope>NUCLEOTIDE SEQUENCE [LARGE SCALE MRNA] OF 403-916</scope>
    <source>
        <strain>cv. Columbia</strain>
    </source>
</reference>
<reference key="5">
    <citation type="submission" date="2005-03" db="EMBL/GenBank/DDBJ databases">
        <title>Large-scale analysis of RIKEN Arabidopsis full-length (RAFL) cDNAs.</title>
        <authorList>
            <person name="Totoki Y."/>
            <person name="Seki M."/>
            <person name="Ishida J."/>
            <person name="Nakajima M."/>
            <person name="Enju A."/>
            <person name="Kamiya A."/>
            <person name="Narusaka M."/>
            <person name="Shin-i T."/>
            <person name="Nakagawa M."/>
            <person name="Sakamoto N."/>
            <person name="Oishi K."/>
            <person name="Kohara Y."/>
            <person name="Kobayashi M."/>
            <person name="Toyoda A."/>
            <person name="Sakaki Y."/>
            <person name="Sakurai T."/>
            <person name="Iida K."/>
            <person name="Akiyama K."/>
            <person name="Satou M."/>
            <person name="Toyoda T."/>
            <person name="Konagaya A."/>
            <person name="Carninci P."/>
            <person name="Kawai J."/>
            <person name="Hayashizaki Y."/>
            <person name="Shinozaki K."/>
        </authorList>
    </citation>
    <scope>NUCLEOTIDE SEQUENCE [LARGE SCALE MRNA] OF 521-916</scope>
    <source>
        <strain>cv. Columbia</strain>
    </source>
</reference>
<reference key="6">
    <citation type="journal article" date="2002" name="Plant Cell">
        <title>Disruption of a DNA topoisomerase I gene affects morphogenesis in Arabidopsis.</title>
        <authorList>
            <person name="Takahashi T."/>
            <person name="Matsuhara S."/>
            <person name="Abe M."/>
            <person name="Komeda Y."/>
        </authorList>
    </citation>
    <scope>FUNCTION</scope>
    <scope>DISRUPTION PHENOTYPE</scope>
</reference>
<reference key="7">
    <citation type="journal article" date="2008" name="J. Proteome Res.">
        <title>Site-specific phosphorylation profiling of Arabidopsis proteins by mass spectrometry and peptide chip analysis.</title>
        <authorList>
            <person name="de la Fuente van Bentem S."/>
            <person name="Anrather D."/>
            <person name="Dohnal I."/>
            <person name="Roitinger E."/>
            <person name="Csaszar E."/>
            <person name="Joore J."/>
            <person name="Buijnink J."/>
            <person name="Carreri A."/>
            <person name="Forzani C."/>
            <person name="Lorkovic Z.J."/>
            <person name="Barta A."/>
            <person name="Lecourieux D."/>
            <person name="Verhounig A."/>
            <person name="Jonak C."/>
            <person name="Hirt H."/>
        </authorList>
    </citation>
    <scope>PHOSPHORYLATION [LARGE SCALE ANALYSIS] AT SER-170</scope>
    <scope>IDENTIFICATION BY MASS SPECTROMETRY [LARGE SCALE ANALYSIS]</scope>
    <source>
        <tissue>Root</tissue>
    </source>
</reference>
<reference key="8">
    <citation type="journal article" date="2009" name="J. Proteomics">
        <title>Phosphoproteomic analysis of nuclei-enriched fractions from Arabidopsis thaliana.</title>
        <authorList>
            <person name="Jones A.M.E."/>
            <person name="MacLean D."/>
            <person name="Studholme D.J."/>
            <person name="Serna-Sanz A."/>
            <person name="Andreasson E."/>
            <person name="Rathjen J.P."/>
            <person name="Peck S.C."/>
        </authorList>
    </citation>
    <scope>SUBCELLULAR LOCATION</scope>
    <scope>PHOSPHORYLATION [LARGE SCALE ANALYSIS] AT SER-170</scope>
    <scope>IDENTIFICATION BY MASS SPECTROMETRY [LARGE SCALE ANALYSIS]</scope>
    <source>
        <strain>cv. Columbia</strain>
    </source>
</reference>
<reference key="9">
    <citation type="journal article" date="2009" name="Plant Physiol.">
        <title>Large-scale Arabidopsis phosphoproteome profiling reveals novel chloroplast kinase substrates and phosphorylation networks.</title>
        <authorList>
            <person name="Reiland S."/>
            <person name="Messerli G."/>
            <person name="Baerenfaller K."/>
            <person name="Gerrits B."/>
            <person name="Endler A."/>
            <person name="Grossmann J."/>
            <person name="Gruissem W."/>
            <person name="Baginsky S."/>
        </authorList>
    </citation>
    <scope>PHOSPHORYLATION [LARGE SCALE ANALYSIS] AT THR-286</scope>
    <scope>IDENTIFICATION BY MASS SPECTROMETRY [LARGE SCALE ANALYSIS]</scope>
</reference>
<reference key="10">
    <citation type="journal article" date="2010" name="Plant Cell">
        <title>MGOUN1 encodes an Arabidopsis type IB DNA topoisomerase required in stem cell regulation and to maintain developmentally regulated gene silencing.</title>
        <authorList>
            <person name="Graf P."/>
            <person name="Dolzblasz A."/>
            <person name="Wuerschum T."/>
            <person name="Lenhard M."/>
            <person name="Pfreundt U."/>
            <person name="Laux T."/>
        </authorList>
    </citation>
    <scope>FUNCTION</scope>
    <scope>TISSUE SPECIFICITY</scope>
    <scope>DISRUPTION PHENOTYPE</scope>
</reference>
<reference key="11">
    <citation type="journal article" date="2014" name="Plant Cell">
        <title>DNA topoisomerase I affects polycomb group protein-mediated epigenetic regulation and plant development by altering nucleosome distribution in Arabidopsis.</title>
        <authorList>
            <person name="Liu X."/>
            <person name="Gao L."/>
            <person name="Dinh T.T."/>
            <person name="Shi T."/>
            <person name="Li D."/>
            <person name="Wang R."/>
            <person name="Guo L."/>
            <person name="Xiao L."/>
            <person name="Chen X."/>
        </authorList>
    </citation>
    <scope>FUNCTION</scope>
</reference>
<reference key="12">
    <citation type="journal article" date="2014" name="Plant Cell">
        <title>A DEK domain-containing protein modulates chromatin structure and function in Arabidopsis.</title>
        <authorList>
            <person name="Waidmann S."/>
            <person name="Kusenda B."/>
            <person name="Mayerhofer J."/>
            <person name="Mechtler K."/>
            <person name="Jonak C."/>
        </authorList>
    </citation>
    <scope>INTERACTION WITH DEK3</scope>
    <scope>IDENTIFICATION BY MASS SPECTROMETRY</scope>
    <source>
        <strain>cv. Columbia</strain>
    </source>
</reference>
<reference key="13">
    <citation type="journal article" date="2014" name="PLoS Genet.">
        <title>DNA topoisomerase 1alpha promotes transcriptional silencing of transposable elements through DNA methylation and histone lysine 9 dimethylation in Arabidopsis.</title>
        <authorList>
            <person name="Dinh T.T."/>
            <person name="Gao L."/>
            <person name="Liu X."/>
            <person name="Li D."/>
            <person name="Li S."/>
            <person name="Zhao Y."/>
            <person name="O'Leary M."/>
            <person name="Le B."/>
            <person name="Schmitz R.J."/>
            <person name="Manavella P.A."/>
            <person name="Manavella P."/>
            <person name="Li S."/>
            <person name="Weigel D."/>
            <person name="Pontes O."/>
            <person name="Ecker J.R."/>
            <person name="Chen X."/>
        </authorList>
    </citation>
    <scope>FUNCTION</scope>
</reference>
<keyword id="KW-0025">Alternative splicing</keyword>
<keyword id="KW-0175">Coiled coil</keyword>
<keyword id="KW-0238">DNA-binding</keyword>
<keyword id="KW-0413">Isomerase</keyword>
<keyword id="KW-0539">Nucleus</keyword>
<keyword id="KW-0597">Phosphoprotein</keyword>
<keyword id="KW-1185">Reference proteome</keyword>
<keyword id="KW-0799">Topoisomerase</keyword>
<feature type="chain" id="PRO_0000145206" description="DNA topoisomerase 1 alpha">
    <location>
        <begin position="1"/>
        <end position="916"/>
    </location>
</feature>
<feature type="domain" description="Topo IB-type catalytic" evidence="3">
    <location>
        <begin position="584"/>
        <end position="914"/>
    </location>
</feature>
<feature type="region of interest" description="Disordered" evidence="5">
    <location>
        <begin position="1"/>
        <end position="369"/>
    </location>
</feature>
<feature type="region of interest" description="Interaction with DNA" evidence="1">
    <location>
        <begin position="577"/>
        <end position="578"/>
    </location>
</feature>
<feature type="region of interest" description="Interaction with DNA" evidence="1">
    <location>
        <begin position="640"/>
        <end position="645"/>
    </location>
</feature>
<feature type="region of interest" description="Interaction with DNA" evidence="1">
    <location>
        <begin position="731"/>
        <end position="733"/>
    </location>
</feature>
<feature type="coiled-coil region" evidence="2">
    <location>
        <begin position="778"/>
        <end position="860"/>
    </location>
</feature>
<feature type="compositionally biased region" description="Low complexity" evidence="5">
    <location>
        <begin position="34"/>
        <end position="47"/>
    </location>
</feature>
<feature type="compositionally biased region" description="Polar residues" evidence="5">
    <location>
        <begin position="60"/>
        <end position="76"/>
    </location>
</feature>
<feature type="compositionally biased region" description="Low complexity" evidence="5">
    <location>
        <begin position="77"/>
        <end position="93"/>
    </location>
</feature>
<feature type="compositionally biased region" description="Basic and acidic residues" evidence="5">
    <location>
        <begin position="102"/>
        <end position="119"/>
    </location>
</feature>
<feature type="compositionally biased region" description="Polar residues" evidence="5">
    <location>
        <begin position="130"/>
        <end position="148"/>
    </location>
</feature>
<feature type="compositionally biased region" description="Basic and acidic residues" evidence="5">
    <location>
        <begin position="149"/>
        <end position="168"/>
    </location>
</feature>
<feature type="compositionally biased region" description="Polar residues" evidence="5">
    <location>
        <begin position="230"/>
        <end position="239"/>
    </location>
</feature>
<feature type="compositionally biased region" description="Basic and acidic residues" evidence="5">
    <location>
        <begin position="253"/>
        <end position="267"/>
    </location>
</feature>
<feature type="compositionally biased region" description="Acidic residues" evidence="5">
    <location>
        <begin position="285"/>
        <end position="294"/>
    </location>
</feature>
<feature type="compositionally biased region" description="Low complexity" evidence="5">
    <location>
        <begin position="354"/>
        <end position="366"/>
    </location>
</feature>
<feature type="active site" description="O-(3'-phospho-DNA)-tyrosine intermediate" evidence="3 4">
    <location>
        <position position="872"/>
    </location>
</feature>
<feature type="site" description="Interaction with DNA" evidence="1">
    <location>
        <position position="466"/>
    </location>
</feature>
<feature type="site" description="Interaction with DNA" evidence="1">
    <location>
        <position position="514"/>
    </location>
</feature>
<feature type="site" description="Interaction with DNA" evidence="1">
    <location>
        <position position="563"/>
    </location>
</feature>
<feature type="site" description="Interaction with DNA" evidence="1">
    <location>
        <position position="595"/>
    </location>
</feature>
<feature type="site" description="Interaction with DNA" evidence="1">
    <location>
        <position position="652"/>
    </location>
</feature>
<feature type="site" description="Interaction with DNA" evidence="1">
    <location>
        <position position="678"/>
    </location>
</feature>
<feature type="site" description="Interaction with DNA" evidence="1">
    <location>
        <position position="720"/>
    </location>
</feature>
<feature type="site" description="Interaction with DNA" evidence="1">
    <location>
        <position position="777"/>
    </location>
</feature>
<feature type="site" description="Interaction with DNA" evidence="1">
    <location>
        <position position="795"/>
    </location>
</feature>
<feature type="modified residue" description="Phosphoserine" evidence="19 20">
    <location>
        <position position="170"/>
    </location>
</feature>
<feature type="modified residue" description="Phosphothreonine" evidence="21">
    <location>
        <position position="286"/>
    </location>
</feature>
<name>TOP1A_ARATH</name>
<organism>
    <name type="scientific">Arabidopsis thaliana</name>
    <name type="common">Mouse-ear cress</name>
    <dbReference type="NCBI Taxonomy" id="3702"/>
    <lineage>
        <taxon>Eukaryota</taxon>
        <taxon>Viridiplantae</taxon>
        <taxon>Streptophyta</taxon>
        <taxon>Embryophyta</taxon>
        <taxon>Tracheophyta</taxon>
        <taxon>Spermatophyta</taxon>
        <taxon>Magnoliopsida</taxon>
        <taxon>eudicotyledons</taxon>
        <taxon>Gunneridae</taxon>
        <taxon>Pentapetalae</taxon>
        <taxon>rosids</taxon>
        <taxon>malvids</taxon>
        <taxon>Brassicales</taxon>
        <taxon>Brassicaceae</taxon>
        <taxon>Camelineae</taxon>
        <taxon>Arabidopsis</taxon>
    </lineage>
</organism>
<evidence type="ECO:0000250" key="1">
    <source>
        <dbReference type="UniProtKB" id="P11387"/>
    </source>
</evidence>
<evidence type="ECO:0000255" key="2"/>
<evidence type="ECO:0000255" key="3">
    <source>
        <dbReference type="PROSITE-ProRule" id="PRU01382"/>
    </source>
</evidence>
<evidence type="ECO:0000255" key="4">
    <source>
        <dbReference type="PROSITE-ProRule" id="PRU10130"/>
    </source>
</evidence>
<evidence type="ECO:0000256" key="5">
    <source>
        <dbReference type="SAM" id="MobiDB-lite"/>
    </source>
</evidence>
<evidence type="ECO:0000269" key="6">
    <source>
    </source>
</evidence>
<evidence type="ECO:0000269" key="7">
    <source>
    </source>
</evidence>
<evidence type="ECO:0000269" key="8">
    <source>
    </source>
</evidence>
<evidence type="ECO:0000269" key="9">
    <source>
    </source>
</evidence>
<evidence type="ECO:0000269" key="10">
    <source>
    </source>
</evidence>
<evidence type="ECO:0000269" key="11">
    <source>
    </source>
</evidence>
<evidence type="ECO:0000269" key="12">
    <source>
    </source>
</evidence>
<evidence type="ECO:0000303" key="13">
    <source>
    </source>
</evidence>
<evidence type="ECO:0000303" key="14">
    <source>
    </source>
</evidence>
<evidence type="ECO:0000303" key="15">
    <source>
    </source>
</evidence>
<evidence type="ECO:0000305" key="16"/>
<evidence type="ECO:0000312" key="17">
    <source>
        <dbReference type="Araport" id="AT5G55300"/>
    </source>
</evidence>
<evidence type="ECO:0000312" key="18">
    <source>
        <dbReference type="EMBL" id="BAB08547.1"/>
    </source>
</evidence>
<evidence type="ECO:0007744" key="19">
    <source>
    </source>
</evidence>
<evidence type="ECO:0007744" key="20">
    <source>
    </source>
</evidence>
<evidence type="ECO:0007744" key="21">
    <source>
    </source>
</evidence>
<dbReference type="EC" id="5.6.2.1" evidence="4"/>
<dbReference type="EMBL" id="X57544">
    <property type="protein sequence ID" value="CAA40763.1"/>
    <property type="molecule type" value="mRNA"/>
</dbReference>
<dbReference type="EMBL" id="AB015479">
    <property type="protein sequence ID" value="BAB08547.1"/>
    <property type="molecule type" value="Genomic_DNA"/>
</dbReference>
<dbReference type="EMBL" id="CP002688">
    <property type="protein sequence ID" value="AED96612.1"/>
    <property type="molecule type" value="Genomic_DNA"/>
</dbReference>
<dbReference type="EMBL" id="AY090993">
    <property type="protein sequence ID" value="AAM14018.1"/>
    <property type="molecule type" value="mRNA"/>
</dbReference>
<dbReference type="EMBL" id="AK221766">
    <property type="protein sequence ID" value="BAD93853.1"/>
    <property type="molecule type" value="mRNA"/>
</dbReference>
<dbReference type="PIR" id="S22864">
    <property type="entry name" value="S22864"/>
</dbReference>
<dbReference type="RefSeq" id="NP_200341.1">
    <molecule id="P30181-1"/>
    <property type="nucleotide sequence ID" value="NM_124912.5"/>
</dbReference>
<dbReference type="SMR" id="P30181"/>
<dbReference type="BioGRID" id="20867">
    <property type="interactions" value="4"/>
</dbReference>
<dbReference type="FunCoup" id="P30181">
    <property type="interactions" value="3106"/>
</dbReference>
<dbReference type="IntAct" id="P30181">
    <property type="interactions" value="3"/>
</dbReference>
<dbReference type="STRING" id="3702.P30181"/>
<dbReference type="GlyGen" id="P30181">
    <property type="glycosylation" value="1 site"/>
</dbReference>
<dbReference type="iPTMnet" id="P30181"/>
<dbReference type="PaxDb" id="3702-AT5G55300.2"/>
<dbReference type="EnsemblPlants" id="AT5G55300.1">
    <molecule id="P30181-1"/>
    <property type="protein sequence ID" value="AT5G55300.1"/>
    <property type="gene ID" value="AT5G55300"/>
</dbReference>
<dbReference type="GeneID" id="835623"/>
<dbReference type="Gramene" id="AT5G55300.1">
    <molecule id="P30181-1"/>
    <property type="protein sequence ID" value="AT5G55300.1"/>
    <property type="gene ID" value="AT5G55300"/>
</dbReference>
<dbReference type="KEGG" id="ath:AT5G55300"/>
<dbReference type="Araport" id="AT5G55300"/>
<dbReference type="TAIR" id="AT5G55300">
    <property type="gene designation" value="TOP1ALPHA"/>
</dbReference>
<dbReference type="eggNOG" id="KOG0981">
    <property type="taxonomic scope" value="Eukaryota"/>
</dbReference>
<dbReference type="HOGENOM" id="CLU_009193_1_2_1"/>
<dbReference type="InParanoid" id="P30181"/>
<dbReference type="OMA" id="CKSECED"/>
<dbReference type="PhylomeDB" id="P30181"/>
<dbReference type="BRENDA" id="5.6.2.1">
    <property type="organism ID" value="399"/>
</dbReference>
<dbReference type="BRENDA" id="5.99.1.2">
    <property type="organism ID" value="399"/>
</dbReference>
<dbReference type="CD-CODE" id="4299E36E">
    <property type="entry name" value="Nucleolus"/>
</dbReference>
<dbReference type="PRO" id="PR:P30181"/>
<dbReference type="Proteomes" id="UP000006548">
    <property type="component" value="Chromosome 5"/>
</dbReference>
<dbReference type="ExpressionAtlas" id="P30181">
    <property type="expression patterns" value="baseline and differential"/>
</dbReference>
<dbReference type="GO" id="GO:0005694">
    <property type="term" value="C:chromosome"/>
    <property type="evidence" value="ECO:0007669"/>
    <property type="project" value="InterPro"/>
</dbReference>
<dbReference type="GO" id="GO:0005634">
    <property type="term" value="C:nucleus"/>
    <property type="evidence" value="ECO:0000314"/>
    <property type="project" value="UniProtKB"/>
</dbReference>
<dbReference type="GO" id="GO:0003677">
    <property type="term" value="F:DNA binding"/>
    <property type="evidence" value="ECO:0007669"/>
    <property type="project" value="UniProtKB-KW"/>
</dbReference>
<dbReference type="GO" id="GO:0003917">
    <property type="term" value="F:DNA topoisomerase type I (single strand cut, ATP-independent) activity"/>
    <property type="evidence" value="ECO:0007669"/>
    <property type="project" value="UniProtKB-EC"/>
</dbReference>
<dbReference type="GO" id="GO:0006265">
    <property type="term" value="P:DNA topological change"/>
    <property type="evidence" value="ECO:0007669"/>
    <property type="project" value="InterPro"/>
</dbReference>
<dbReference type="CDD" id="cd00659">
    <property type="entry name" value="Topo_IB_C"/>
    <property type="match status" value="1"/>
</dbReference>
<dbReference type="FunFam" id="1.10.10.41:FF:000001">
    <property type="entry name" value="DNA topoisomerase I"/>
    <property type="match status" value="1"/>
</dbReference>
<dbReference type="FunFam" id="1.10.132.10:FF:000002">
    <property type="entry name" value="DNA topoisomerase I"/>
    <property type="match status" value="1"/>
</dbReference>
<dbReference type="FunFam" id="2.170.11.10:FF:000001">
    <property type="entry name" value="DNA topoisomerase I"/>
    <property type="match status" value="1"/>
</dbReference>
<dbReference type="FunFam" id="3.90.15.10:FF:000003">
    <property type="entry name" value="DNA topoisomerase I"/>
    <property type="match status" value="1"/>
</dbReference>
<dbReference type="Gene3D" id="1.10.132.10">
    <property type="match status" value="1"/>
</dbReference>
<dbReference type="Gene3D" id="2.170.11.10">
    <property type="entry name" value="DNA Topoisomerase I, domain 2"/>
    <property type="match status" value="1"/>
</dbReference>
<dbReference type="Gene3D" id="3.90.15.10">
    <property type="entry name" value="Topoisomerase I, Chain A, domain 3"/>
    <property type="match status" value="1"/>
</dbReference>
<dbReference type="Gene3D" id="1.10.10.41">
    <property type="entry name" value="Yeast DNA topoisomerase - domain 1"/>
    <property type="match status" value="1"/>
</dbReference>
<dbReference type="InterPro" id="IPR011010">
    <property type="entry name" value="DNA_brk_join_enz"/>
</dbReference>
<dbReference type="InterPro" id="IPR013034">
    <property type="entry name" value="DNA_topo_DNA_db_N_dom1"/>
</dbReference>
<dbReference type="InterPro" id="IPR013030">
    <property type="entry name" value="DNA_topo_DNA_db_N_dom2"/>
</dbReference>
<dbReference type="InterPro" id="IPR001631">
    <property type="entry name" value="TopoI"/>
</dbReference>
<dbReference type="InterPro" id="IPR025834">
    <property type="entry name" value="TopoI_C_dom"/>
</dbReference>
<dbReference type="InterPro" id="IPR014711">
    <property type="entry name" value="TopoI_cat_a-hlx-sub_euk"/>
</dbReference>
<dbReference type="InterPro" id="IPR014727">
    <property type="entry name" value="TopoI_cat_a/b-sub_euk"/>
</dbReference>
<dbReference type="InterPro" id="IPR013500">
    <property type="entry name" value="TopoI_cat_euk"/>
</dbReference>
<dbReference type="InterPro" id="IPR008336">
    <property type="entry name" value="TopoI_DNA-bd_euk"/>
</dbReference>
<dbReference type="InterPro" id="IPR036202">
    <property type="entry name" value="TopoI_DNA-bd_euk_N_sf"/>
</dbReference>
<dbReference type="InterPro" id="IPR013499">
    <property type="entry name" value="TopoI_euk"/>
</dbReference>
<dbReference type="InterPro" id="IPR018521">
    <property type="entry name" value="TopoIB_AS"/>
</dbReference>
<dbReference type="InterPro" id="IPR051062">
    <property type="entry name" value="Topoisomerase_IB"/>
</dbReference>
<dbReference type="PANTHER" id="PTHR10290:SF16">
    <property type="entry name" value="DNA TOPOISOMERASE 1 ALPHA"/>
    <property type="match status" value="1"/>
</dbReference>
<dbReference type="PANTHER" id="PTHR10290">
    <property type="entry name" value="DNA TOPOISOMERASE I"/>
    <property type="match status" value="1"/>
</dbReference>
<dbReference type="Pfam" id="PF14370">
    <property type="entry name" value="Topo_C_assoc"/>
    <property type="match status" value="1"/>
</dbReference>
<dbReference type="Pfam" id="PF01028">
    <property type="entry name" value="Topoisom_I"/>
    <property type="match status" value="1"/>
</dbReference>
<dbReference type="Pfam" id="PF02919">
    <property type="entry name" value="Topoisom_I_N"/>
    <property type="match status" value="1"/>
</dbReference>
<dbReference type="PRINTS" id="PR00416">
    <property type="entry name" value="EUTPISMRASEI"/>
</dbReference>
<dbReference type="SMART" id="SM00435">
    <property type="entry name" value="TOPEUc"/>
    <property type="match status" value="1"/>
</dbReference>
<dbReference type="SUPFAM" id="SSF56349">
    <property type="entry name" value="DNA breaking-rejoining enzymes"/>
    <property type="match status" value="1"/>
</dbReference>
<dbReference type="SUPFAM" id="SSF56741">
    <property type="entry name" value="Eukaryotic DNA topoisomerase I, N-terminal DNA-binding fragment"/>
    <property type="match status" value="1"/>
</dbReference>
<dbReference type="PROSITE" id="PS00176">
    <property type="entry name" value="TOPO_IB_1"/>
    <property type="match status" value="1"/>
</dbReference>
<dbReference type="PROSITE" id="PS52038">
    <property type="entry name" value="TOPO_IB_2"/>
    <property type="match status" value="1"/>
</dbReference>
<proteinExistence type="evidence at protein level"/>
<sequence>MGTETVSKPVMDNGSGDSDDDKPLAFKRNNTVASNSNQSKSNSQRSKAVPTTKVSPMRSPVTSPNGTTPSNKTSIVKSSMPSSSSKASPAKSPLRNDMPSTVKDRSQLQKDQSECKIEHEDSEDDRPLSSILSGNKGPTSSRQVSSPQPEKKNNGDRPLDRASRIIKDESDDETPISSMFRKKIDSGMSGGNQLSNDEKKPLVQKLHQNGSTVKNEVPNGKVLGKRPLEKNSSADQSSLKKAKISASPTSVKMKQDSVKKEIDDKGRVLVSPKMKAKQLSTREDGTDDDDDDDVPISKRFKSDSSNSNTSSAKPKAVKLNSTSSAAKPKARNVVSPRSRAMTKNTKKVTKDSKYSTSSKSSPSSGDGQKKWTTLVHNGVIFPPPYKPHGIKILYKGKPVDLTIEQEEVATMFAVMRETDYYTKPQFRENFWNDWRRLLGKKHVIQKLDDCDFTPIYEWHLEEKEKKKQMSTEEKKALKEEKMKQEEKYMWAVVDGVKEKIGNFRVEPPGLFRGRGEHPKMGKLKKRIHPCEITLNIGKGAPIPECPIAGERWKEVKHDNTVTWLAFWADPINPKEFKYVFLGAGSSLKGLSDKEKYEKARNLTDHIDNIRTTYTKNFTAKDVKMRQIAVATYLIDKLALRAGNEKDDDEADTVGCCTLKVGNVECIPPNKIKFDFLGKDSIQYVNTVEVEPLVYKAIGQFQAGKSKTDDLFDELDTSKLNAHLKELVPGLTAKVFRTYNASITLDEMLSQETKDGDVTQKIVVYQKANKEVAIICNHQRTVSKTHGAQIEKLTARIEELKEVLKELKTNLDRAKKGKPPLEGSDGKKIRSLEPNAWEKKIAQQSAKIEKMERDMHTKEDLKTVALGTSKINYLDPRITVAWCKRHEVPIEKIFTKSLLEKFAWAMDVEPEYRFSRR</sequence>
<gene>
    <name evidence="16" type="primary">TOP1A</name>
    <name evidence="16" type="synonym">FAS5</name>
    <name evidence="15" type="synonym">MGO1</name>
    <name evidence="14" type="synonym">TOP1</name>
    <name evidence="13" type="synonym">TOP1ALPHA</name>
    <name evidence="17" type="ordered locus">At5g55300</name>
    <name evidence="18" type="ORF">MTE17.1</name>
</gene>
<protein>
    <recommendedName>
        <fullName evidence="16">DNA topoisomerase 1 alpha</fullName>
        <ecNumber evidence="4">5.6.2.1</ecNumber>
    </recommendedName>
    <alternativeName>
        <fullName evidence="14">DNA topoisomerase 1</fullName>
    </alternativeName>
    <alternativeName>
        <fullName evidence="14">DNA topoisomerase I</fullName>
    </alternativeName>
    <alternativeName>
        <fullName evidence="16">Protein FASCIATA 5</fullName>
    </alternativeName>
    <alternativeName>
        <fullName evidence="15">Protein MGOUN1</fullName>
    </alternativeName>
</protein>
<comment type="function">
    <text evidence="1 6 7 9 10 11">Releases the supercoiling and torsional tension of DNA introduced during the DNA replication and transcription by transiently cleaving and rejoining one strand of the DNA duplex. Introduces a single-strand break via transesterification at a target site in duplex DNA. The scissile phosphodiester is attacked by the catalytic tyrosine of the enzyme, resulting in the formation of a DNA-(3'-phosphotyrosyl)-enzyme intermediate and the expulsion of a 5'-OH DNA strand. The free DNA strand then rotates around the intact phosphodiester bond on the opposing strand, thus removing DNA supercoils. Finally, in the religation step, the DNA 5'-OH attacks the covalent intermediate to expel the active-site tyrosine and restore the DNA phosphodiester backbone (By similarity). Can complement a TOP1-deficient yeast mutant (PubMed:16669064). Plays a critical role in the maintenance of a regular pattern of organ initiation. Topoisomerases I enzymes (TOP1A and TOP1B) are essential for plant survival (PubMed:12215507). Functions together with the stem cell maintenance gene WUSCHEL (WUS) in stem cell regulation. Required to maintain developmentally regulated gene repression. Functions synergistically with chromatin remodeling factors (PubMed:20228247). Is required for the repression of WUS expression in flower development. Plays a role in polycomb group (PcG) protein-mediated histone H3 trimethylation on 'Lys-27' (H3K27me3) at the WUS gene locus. H3K27me3 induces transcriptional repression of WUS. May assist AGAMOUS (AG) in recruiting PcG proteins to WUS locus. Reduces nucleosome density, especially at genes that are targets of PcG proteins (PubMed:25070639). Plays a role in epigenetic silencing. Involved in RNA-directed DNA methylation (RdDM) by promoting Pol V transcription to generate long non-coding RNA transcripts. Is dispensable for Pol IV-mediated small interfering RNA (siRNA) biogenesis. Promotes transposable element (TE) silencing at endogenous RdDM target loci through histone H3 dimethylation of 'Lys-9' (H3K9me2). Promotes the production of Pol V-dependent long non-coding transcripts that facilitate the recruitment of siRNA-AGO4 and AGO4 occupancy at TEs (PubMed:24992598).</text>
</comment>
<comment type="catalytic activity">
    <reaction evidence="4">
        <text>ATP-independent breakage of single-stranded DNA, followed by passage and rejoining.</text>
        <dbReference type="EC" id="5.6.2.1"/>
    </reaction>
</comment>
<comment type="subunit">
    <text evidence="12">Interacts with DEK3.</text>
</comment>
<comment type="subcellular location">
    <subcellularLocation>
        <location evidence="8">Nucleus</location>
    </subcellularLocation>
</comment>
<comment type="alternative products">
    <event type="alternative splicing"/>
    <isoform>
        <id>P30181-1</id>
        <name>1</name>
        <sequence type="displayed"/>
    </isoform>
    <text>A number of isoforms are produced. According to EST sequences.</text>
</comment>
<comment type="tissue specificity">
    <text evidence="9">Expressed in inflorescence meristems. Expressed in primordia of sepals, petals, stamens, carpels and ovules. Expressed in midstage embryos.</text>
</comment>
<comment type="disruption phenotype">
    <text evidence="6 9">Defects in phyllotaxis and plant architecture. Morphological abnormalities of several organs (PubMed:12215507). Defects in cellular development and organization of both the shoot and the root meristem (PubMed:20228247).</text>
</comment>
<comment type="miscellaneous">
    <text>Eukaryotic topoisomerase I and II can relax both negative and positive supercoils, whereas prokaryotic enzymes relax only negative supercoils.</text>
</comment>
<comment type="similarity">
    <text evidence="16">Belongs to the type IB topoisomerase family.</text>
</comment>